<accession>A6QHK9</accession>
<reference key="1">
    <citation type="journal article" date="2008" name="J. Bacteriol.">
        <title>Genome sequence of Staphylococcus aureus strain Newman and comparative analysis of staphylococcal genomes: polymorphism and evolution of two major pathogenicity islands.</title>
        <authorList>
            <person name="Baba T."/>
            <person name="Bae T."/>
            <person name="Schneewind O."/>
            <person name="Takeuchi F."/>
            <person name="Hiramatsu K."/>
        </authorList>
    </citation>
    <scope>NUCLEOTIDE SEQUENCE [LARGE SCALE GENOMIC DNA]</scope>
    <source>
        <strain>Newman</strain>
    </source>
</reference>
<sequence length="433" mass="48623">MTATWEKKEGNEGLLTVTVPAEKVNKALDQAFKKVVKQINVPGFRKGKVPRPIFEQRFGVEALYQDAIDILLPDAYGEAIDETDIKPVAQPEVSVTQIEKGKDFIFEATVTVEPEVKLGDYKGLEIEKQETELSDDELQEAIDHSLGHLAEMVVKEDGVVENGDTVNIDFSGSVDGEEFEGGQAEGYDLEIGSGSFIPGFEEQLEGMKVDEEKDVVVTFPEEYHAEELAGKEATFKTKVNEIKFKEVPELTDEIANELDAEANTVDEYKENLRKRLAEQKATDAENVEKEEAITKATDNTTIDIPEAMINTELDRMVSEFAQRIQQQGLDLQTYFQISGQDETQLREQMKDDAEQRVKTNLTLTAIAEAEKIEATDEDIDKELEKMSKQFNISVEDIKNTLGNTDIIKNDVRIQKVIDLLRDNAKFVEGTKED</sequence>
<dbReference type="EC" id="5.2.1.8" evidence="1"/>
<dbReference type="EMBL" id="AP009351">
    <property type="protein sequence ID" value="BAF67841.1"/>
    <property type="molecule type" value="Genomic_DNA"/>
</dbReference>
<dbReference type="RefSeq" id="WP_000127570.1">
    <property type="nucleotide sequence ID" value="NC_009641.1"/>
</dbReference>
<dbReference type="SMR" id="A6QHK9"/>
<dbReference type="KEGG" id="sae:NWMN_1569"/>
<dbReference type="HOGENOM" id="CLU_033058_3_2_9"/>
<dbReference type="Proteomes" id="UP000006386">
    <property type="component" value="Chromosome"/>
</dbReference>
<dbReference type="GO" id="GO:0005737">
    <property type="term" value="C:cytoplasm"/>
    <property type="evidence" value="ECO:0007669"/>
    <property type="project" value="UniProtKB-SubCell"/>
</dbReference>
<dbReference type="GO" id="GO:0003755">
    <property type="term" value="F:peptidyl-prolyl cis-trans isomerase activity"/>
    <property type="evidence" value="ECO:0007669"/>
    <property type="project" value="UniProtKB-UniRule"/>
</dbReference>
<dbReference type="GO" id="GO:0044183">
    <property type="term" value="F:protein folding chaperone"/>
    <property type="evidence" value="ECO:0007669"/>
    <property type="project" value="TreeGrafter"/>
</dbReference>
<dbReference type="GO" id="GO:0043022">
    <property type="term" value="F:ribosome binding"/>
    <property type="evidence" value="ECO:0007669"/>
    <property type="project" value="TreeGrafter"/>
</dbReference>
<dbReference type="GO" id="GO:0051083">
    <property type="term" value="P:'de novo' cotranslational protein folding"/>
    <property type="evidence" value="ECO:0007669"/>
    <property type="project" value="TreeGrafter"/>
</dbReference>
<dbReference type="GO" id="GO:0051301">
    <property type="term" value="P:cell division"/>
    <property type="evidence" value="ECO:0007669"/>
    <property type="project" value="UniProtKB-KW"/>
</dbReference>
<dbReference type="GO" id="GO:0061077">
    <property type="term" value="P:chaperone-mediated protein folding"/>
    <property type="evidence" value="ECO:0007669"/>
    <property type="project" value="TreeGrafter"/>
</dbReference>
<dbReference type="GO" id="GO:0015031">
    <property type="term" value="P:protein transport"/>
    <property type="evidence" value="ECO:0007669"/>
    <property type="project" value="UniProtKB-UniRule"/>
</dbReference>
<dbReference type="GO" id="GO:0043335">
    <property type="term" value="P:protein unfolding"/>
    <property type="evidence" value="ECO:0007669"/>
    <property type="project" value="TreeGrafter"/>
</dbReference>
<dbReference type="FunFam" id="3.10.50.40:FF:000001">
    <property type="entry name" value="Trigger factor"/>
    <property type="match status" value="1"/>
</dbReference>
<dbReference type="FunFam" id="3.30.70.1050:FF:000002">
    <property type="entry name" value="Trigger factor"/>
    <property type="match status" value="1"/>
</dbReference>
<dbReference type="Gene3D" id="3.10.50.40">
    <property type="match status" value="1"/>
</dbReference>
<dbReference type="Gene3D" id="3.30.70.1050">
    <property type="entry name" value="Trigger factor ribosome-binding domain"/>
    <property type="match status" value="1"/>
</dbReference>
<dbReference type="Gene3D" id="1.10.3120.10">
    <property type="entry name" value="Trigger factor, C-terminal domain"/>
    <property type="match status" value="1"/>
</dbReference>
<dbReference type="HAMAP" id="MF_00303">
    <property type="entry name" value="Trigger_factor_Tig"/>
    <property type="match status" value="1"/>
</dbReference>
<dbReference type="InterPro" id="IPR046357">
    <property type="entry name" value="PPIase_dom_sf"/>
</dbReference>
<dbReference type="InterPro" id="IPR001179">
    <property type="entry name" value="PPIase_FKBP_dom"/>
</dbReference>
<dbReference type="InterPro" id="IPR005215">
    <property type="entry name" value="Trig_fac"/>
</dbReference>
<dbReference type="InterPro" id="IPR008880">
    <property type="entry name" value="Trigger_fac_C"/>
</dbReference>
<dbReference type="InterPro" id="IPR037041">
    <property type="entry name" value="Trigger_fac_C_sf"/>
</dbReference>
<dbReference type="InterPro" id="IPR008881">
    <property type="entry name" value="Trigger_fac_ribosome-bd_bac"/>
</dbReference>
<dbReference type="InterPro" id="IPR036611">
    <property type="entry name" value="Trigger_fac_ribosome-bd_sf"/>
</dbReference>
<dbReference type="InterPro" id="IPR027304">
    <property type="entry name" value="Trigger_fact/SurA_dom_sf"/>
</dbReference>
<dbReference type="NCBIfam" id="TIGR00115">
    <property type="entry name" value="tig"/>
    <property type="match status" value="1"/>
</dbReference>
<dbReference type="PANTHER" id="PTHR30560">
    <property type="entry name" value="TRIGGER FACTOR CHAPERONE AND PEPTIDYL-PROLYL CIS/TRANS ISOMERASE"/>
    <property type="match status" value="1"/>
</dbReference>
<dbReference type="PANTHER" id="PTHR30560:SF3">
    <property type="entry name" value="TRIGGER FACTOR-LIKE PROTEIN TIG, CHLOROPLASTIC"/>
    <property type="match status" value="1"/>
</dbReference>
<dbReference type="Pfam" id="PF00254">
    <property type="entry name" value="FKBP_C"/>
    <property type="match status" value="1"/>
</dbReference>
<dbReference type="Pfam" id="PF05698">
    <property type="entry name" value="Trigger_C"/>
    <property type="match status" value="1"/>
</dbReference>
<dbReference type="Pfam" id="PF05697">
    <property type="entry name" value="Trigger_N"/>
    <property type="match status" value="1"/>
</dbReference>
<dbReference type="PIRSF" id="PIRSF003095">
    <property type="entry name" value="Trigger_factor"/>
    <property type="match status" value="1"/>
</dbReference>
<dbReference type="SUPFAM" id="SSF54534">
    <property type="entry name" value="FKBP-like"/>
    <property type="match status" value="1"/>
</dbReference>
<dbReference type="SUPFAM" id="SSF109998">
    <property type="entry name" value="Triger factor/SurA peptide-binding domain-like"/>
    <property type="match status" value="1"/>
</dbReference>
<dbReference type="SUPFAM" id="SSF102735">
    <property type="entry name" value="Trigger factor ribosome-binding domain"/>
    <property type="match status" value="1"/>
</dbReference>
<dbReference type="PROSITE" id="PS50059">
    <property type="entry name" value="FKBP_PPIASE"/>
    <property type="match status" value="1"/>
</dbReference>
<protein>
    <recommendedName>
        <fullName evidence="1">Trigger factor</fullName>
        <shortName evidence="1">TF</shortName>
        <ecNumber evidence="1">5.2.1.8</ecNumber>
    </recommendedName>
    <alternativeName>
        <fullName evidence="1">PPIase</fullName>
    </alternativeName>
</protein>
<evidence type="ECO:0000255" key="1">
    <source>
        <dbReference type="HAMAP-Rule" id="MF_00303"/>
    </source>
</evidence>
<keyword id="KW-0131">Cell cycle</keyword>
<keyword id="KW-0132">Cell division</keyword>
<keyword id="KW-0143">Chaperone</keyword>
<keyword id="KW-0963">Cytoplasm</keyword>
<keyword id="KW-0413">Isomerase</keyword>
<keyword id="KW-0697">Rotamase</keyword>
<proteinExistence type="inferred from homology"/>
<organism>
    <name type="scientific">Staphylococcus aureus (strain Newman)</name>
    <dbReference type="NCBI Taxonomy" id="426430"/>
    <lineage>
        <taxon>Bacteria</taxon>
        <taxon>Bacillati</taxon>
        <taxon>Bacillota</taxon>
        <taxon>Bacilli</taxon>
        <taxon>Bacillales</taxon>
        <taxon>Staphylococcaceae</taxon>
        <taxon>Staphylococcus</taxon>
    </lineage>
</organism>
<feature type="chain" id="PRO_1000071989" description="Trigger factor">
    <location>
        <begin position="1"/>
        <end position="433"/>
    </location>
</feature>
<feature type="domain" description="PPIase FKBP-type" evidence="1">
    <location>
        <begin position="163"/>
        <end position="248"/>
    </location>
</feature>
<gene>
    <name evidence="1" type="primary">tig</name>
    <name type="ordered locus">NWMN_1569</name>
</gene>
<name>TIG_STAAE</name>
<comment type="function">
    <text evidence="1">Involved in protein export. Acts as a chaperone by maintaining the newly synthesized protein in an open conformation. Functions as a peptidyl-prolyl cis-trans isomerase.</text>
</comment>
<comment type="catalytic activity">
    <reaction evidence="1">
        <text>[protein]-peptidylproline (omega=180) = [protein]-peptidylproline (omega=0)</text>
        <dbReference type="Rhea" id="RHEA:16237"/>
        <dbReference type="Rhea" id="RHEA-COMP:10747"/>
        <dbReference type="Rhea" id="RHEA-COMP:10748"/>
        <dbReference type="ChEBI" id="CHEBI:83833"/>
        <dbReference type="ChEBI" id="CHEBI:83834"/>
        <dbReference type="EC" id="5.2.1.8"/>
    </reaction>
</comment>
<comment type="subcellular location">
    <subcellularLocation>
        <location>Cytoplasm</location>
    </subcellularLocation>
    <text evidence="1">About half TF is bound to the ribosome near the polypeptide exit tunnel while the other half is free in the cytoplasm.</text>
</comment>
<comment type="domain">
    <text evidence="1">Consists of 3 domains; the N-terminus binds the ribosome, the middle domain has PPIase activity, while the C-terminus has intrinsic chaperone activity on its own.</text>
</comment>
<comment type="similarity">
    <text evidence="1">Belongs to the FKBP-type PPIase family. Tig subfamily.</text>
</comment>